<comment type="similarity">
    <text evidence="1">Belongs to the UPF0457 family.</text>
</comment>
<protein>
    <recommendedName>
        <fullName>UPF0457 protein SERP1772</fullName>
    </recommendedName>
</protein>
<sequence>MAMTVKKNDNEVRIQWRVADIKIPNNEIKNVTQDQDIHAVPEENGKEISRIGSTFGKTNRVLIDTDQHLYIIYTQNDQKVYNELTK</sequence>
<evidence type="ECO:0000305" key="1"/>
<keyword id="KW-1185">Reference proteome</keyword>
<dbReference type="EMBL" id="CP000029">
    <property type="protein sequence ID" value="AAW55131.1"/>
    <property type="molecule type" value="Genomic_DNA"/>
</dbReference>
<dbReference type="RefSeq" id="WP_001829752.1">
    <property type="nucleotide sequence ID" value="NC_002976.3"/>
</dbReference>
<dbReference type="SMR" id="Q5HM57"/>
<dbReference type="STRING" id="176279.SERP1772"/>
<dbReference type="KEGG" id="ser:SERP1772"/>
<dbReference type="eggNOG" id="ENOG50332PH">
    <property type="taxonomic scope" value="Bacteria"/>
</dbReference>
<dbReference type="HOGENOM" id="CLU_174851_0_0_9"/>
<dbReference type="Proteomes" id="UP000000531">
    <property type="component" value="Chromosome"/>
</dbReference>
<dbReference type="InterPro" id="IPR055365">
    <property type="entry name" value="PH_SunI-like"/>
</dbReference>
<dbReference type="Pfam" id="PF23491">
    <property type="entry name" value="bPH_8"/>
    <property type="match status" value="1"/>
</dbReference>
<name>Y1772_STAEQ</name>
<proteinExistence type="inferred from homology"/>
<accession>Q5HM57</accession>
<organism>
    <name type="scientific">Staphylococcus epidermidis (strain ATCC 35984 / DSM 28319 / BCRC 17069 / CCUG 31568 / BM 3577 / RP62A)</name>
    <dbReference type="NCBI Taxonomy" id="176279"/>
    <lineage>
        <taxon>Bacteria</taxon>
        <taxon>Bacillati</taxon>
        <taxon>Bacillota</taxon>
        <taxon>Bacilli</taxon>
        <taxon>Bacillales</taxon>
        <taxon>Staphylococcaceae</taxon>
        <taxon>Staphylococcus</taxon>
    </lineage>
</organism>
<gene>
    <name type="ordered locus">SERP1772</name>
</gene>
<reference key="1">
    <citation type="journal article" date="2005" name="J. Bacteriol.">
        <title>Insights on evolution of virulence and resistance from the complete genome analysis of an early methicillin-resistant Staphylococcus aureus strain and a biofilm-producing methicillin-resistant Staphylococcus epidermidis strain.</title>
        <authorList>
            <person name="Gill S.R."/>
            <person name="Fouts D.E."/>
            <person name="Archer G.L."/>
            <person name="Mongodin E.F."/>
            <person name="DeBoy R.T."/>
            <person name="Ravel J."/>
            <person name="Paulsen I.T."/>
            <person name="Kolonay J.F."/>
            <person name="Brinkac L.M."/>
            <person name="Beanan M.J."/>
            <person name="Dodson R.J."/>
            <person name="Daugherty S.C."/>
            <person name="Madupu R."/>
            <person name="Angiuoli S.V."/>
            <person name="Durkin A.S."/>
            <person name="Haft D.H."/>
            <person name="Vamathevan J.J."/>
            <person name="Khouri H."/>
            <person name="Utterback T.R."/>
            <person name="Lee C."/>
            <person name="Dimitrov G."/>
            <person name="Jiang L."/>
            <person name="Qin H."/>
            <person name="Weidman J."/>
            <person name="Tran K."/>
            <person name="Kang K.H."/>
            <person name="Hance I.R."/>
            <person name="Nelson K.E."/>
            <person name="Fraser C.M."/>
        </authorList>
    </citation>
    <scope>NUCLEOTIDE SEQUENCE [LARGE SCALE GENOMIC DNA]</scope>
    <source>
        <strain>ATCC 35984 / DSM 28319 / BCRC 17069 / CCUG 31568 / BM 3577 / RP62A</strain>
    </source>
</reference>
<feature type="chain" id="PRO_0000294507" description="UPF0457 protein SERP1772">
    <location>
        <begin position="1"/>
        <end position="86"/>
    </location>
</feature>